<gene>
    <name type="primary">gor</name>
    <name type="ordered locus">HI_0161</name>
</gene>
<organism>
    <name type="scientific">Haemophilus influenzae (strain ATCC 51907 / DSM 11121 / KW20 / Rd)</name>
    <dbReference type="NCBI Taxonomy" id="71421"/>
    <lineage>
        <taxon>Bacteria</taxon>
        <taxon>Pseudomonadati</taxon>
        <taxon>Pseudomonadota</taxon>
        <taxon>Gammaproteobacteria</taxon>
        <taxon>Pasteurellales</taxon>
        <taxon>Pasteurellaceae</taxon>
        <taxon>Haemophilus</taxon>
    </lineage>
</organism>
<keyword id="KW-0963">Cytoplasm</keyword>
<keyword id="KW-1015">Disulfide bond</keyword>
<keyword id="KW-0274">FAD</keyword>
<keyword id="KW-0285">Flavoprotein</keyword>
<keyword id="KW-0521">NADP</keyword>
<keyword id="KW-0560">Oxidoreductase</keyword>
<keyword id="KW-0676">Redox-active center</keyword>
<keyword id="KW-1185">Reference proteome</keyword>
<comment type="function">
    <text evidence="2">Catalyzes the reduction of glutathione disulfide (GSSG) to reduced glutathione (GSH). Constitutes the major mechanism to maintain a high GSH:GSSG ratio in the cytosol.</text>
</comment>
<comment type="catalytic activity">
    <reaction evidence="2">
        <text>2 glutathione + NADP(+) = glutathione disulfide + NADPH + H(+)</text>
        <dbReference type="Rhea" id="RHEA:11740"/>
        <dbReference type="ChEBI" id="CHEBI:15378"/>
        <dbReference type="ChEBI" id="CHEBI:57783"/>
        <dbReference type="ChEBI" id="CHEBI:57925"/>
        <dbReference type="ChEBI" id="CHEBI:58297"/>
        <dbReference type="ChEBI" id="CHEBI:58349"/>
        <dbReference type="EC" id="1.8.1.7"/>
    </reaction>
</comment>
<comment type="cofactor">
    <cofactor evidence="2">
        <name>FAD</name>
        <dbReference type="ChEBI" id="CHEBI:57692"/>
    </cofactor>
    <text evidence="2">Binds 1 FAD per subunit.</text>
</comment>
<comment type="subunit">
    <text evidence="2">Homodimer.</text>
</comment>
<comment type="subcellular location">
    <subcellularLocation>
        <location evidence="2">Cytoplasm</location>
    </subcellularLocation>
</comment>
<comment type="miscellaneous">
    <text evidence="2">The active site is a redox-active disulfide bond.</text>
</comment>
<comment type="similarity">
    <text evidence="3">Belongs to the class-I pyridine nucleotide-disulfide oxidoreductase family.</text>
</comment>
<name>GSHR_HAEIN</name>
<feature type="chain" id="PRO_0000067976" description="Glutathione reductase">
    <location>
        <begin position="1"/>
        <end position="456"/>
    </location>
</feature>
<feature type="active site" description="Proton acceptor" evidence="2">
    <location>
        <position position="445"/>
    </location>
</feature>
<feature type="binding site" evidence="2">
    <location>
        <position position="14"/>
    </location>
    <ligand>
        <name>FAD</name>
        <dbReference type="ChEBI" id="CHEBI:57692"/>
    </ligand>
</feature>
<feature type="binding site" evidence="1">
    <location>
        <position position="14"/>
    </location>
    <ligand>
        <name>glutathione</name>
        <dbReference type="ChEBI" id="CHEBI:57925"/>
    </ligand>
</feature>
<feature type="binding site" evidence="2">
    <location>
        <position position="15"/>
    </location>
    <ligand>
        <name>FAD</name>
        <dbReference type="ChEBI" id="CHEBI:57692"/>
    </ligand>
</feature>
<feature type="binding site" evidence="2">
    <location>
        <position position="34"/>
    </location>
    <ligand>
        <name>FAD</name>
        <dbReference type="ChEBI" id="CHEBI:57692"/>
    </ligand>
</feature>
<feature type="binding site" evidence="2">
    <location>
        <position position="41"/>
    </location>
    <ligand>
        <name>FAD</name>
        <dbReference type="ChEBI" id="CHEBI:57692"/>
    </ligand>
</feature>
<feature type="binding site" evidence="2">
    <location>
        <position position="42"/>
    </location>
    <ligand>
        <name>FAD</name>
        <dbReference type="ChEBI" id="CHEBI:57692"/>
    </ligand>
</feature>
<feature type="binding site" evidence="2">
    <location>
        <position position="50"/>
    </location>
    <ligand>
        <name>FAD</name>
        <dbReference type="ChEBI" id="CHEBI:57692"/>
    </ligand>
</feature>
<feature type="binding site" evidence="1">
    <location>
        <position position="99"/>
    </location>
    <ligand>
        <name>glutathione</name>
        <dbReference type="ChEBI" id="CHEBI:57925"/>
    </ligand>
</feature>
<feature type="binding site" evidence="2">
    <location>
        <position position="115"/>
    </location>
    <ligand>
        <name>FAD</name>
        <dbReference type="ChEBI" id="CHEBI:57692"/>
    </ligand>
</feature>
<feature type="binding site" evidence="2">
    <location>
        <position position="180"/>
    </location>
    <ligand>
        <name>NADP(+)</name>
        <dbReference type="ChEBI" id="CHEBI:58349"/>
    </ligand>
</feature>
<feature type="binding site" evidence="2">
    <location>
        <position position="183"/>
    </location>
    <ligand>
        <name>NADP(+)</name>
        <dbReference type="ChEBI" id="CHEBI:58349"/>
    </ligand>
</feature>
<feature type="binding site" evidence="2">
    <location>
        <position position="186"/>
    </location>
    <ligand>
        <name>NADP(+)</name>
        <dbReference type="ChEBI" id="CHEBI:58349"/>
    </ligand>
</feature>
<feature type="binding site" evidence="2">
    <location>
        <position position="203"/>
    </location>
    <ligand>
        <name>NADP(+)</name>
        <dbReference type="ChEBI" id="CHEBI:58349"/>
    </ligand>
</feature>
<feature type="binding site" evidence="2">
    <location>
        <position position="209"/>
    </location>
    <ligand>
        <name>NADP(+)</name>
        <dbReference type="ChEBI" id="CHEBI:58349"/>
    </ligand>
</feature>
<feature type="binding site" evidence="2">
    <location>
        <position position="267"/>
    </location>
    <ligand>
        <name>NADP(+)</name>
        <dbReference type="ChEBI" id="CHEBI:58349"/>
    </ligand>
</feature>
<feature type="binding site" evidence="2">
    <location>
        <position position="308"/>
    </location>
    <ligand>
        <name>FAD</name>
        <dbReference type="ChEBI" id="CHEBI:57692"/>
    </ligand>
</feature>
<feature type="binding site" evidence="2">
    <location>
        <position position="315"/>
    </location>
    <ligand>
        <name>NADP(+)</name>
        <dbReference type="ChEBI" id="CHEBI:58349"/>
    </ligand>
</feature>
<feature type="binding site" evidence="2">
    <location>
        <position position="317"/>
    </location>
    <ligand>
        <name>FAD</name>
        <dbReference type="ChEBI" id="CHEBI:57692"/>
    </ligand>
</feature>
<feature type="binding site" evidence="1">
    <location>
        <position position="325"/>
    </location>
    <ligand>
        <name>glutathione</name>
        <dbReference type="ChEBI" id="CHEBI:57925"/>
    </ligand>
</feature>
<feature type="binding site" evidence="2">
    <location>
        <position position="348"/>
    </location>
    <ligand>
        <name>NADP(+)</name>
        <dbReference type="ChEBI" id="CHEBI:58349"/>
    </ligand>
</feature>
<feature type="binding site" evidence="2">
    <location>
        <position position="445"/>
    </location>
    <ligand>
        <name>FAD</name>
        <dbReference type="ChEBI" id="CHEBI:57692"/>
    </ligand>
</feature>
<feature type="disulfide bond" description="Redox-active" evidence="2">
    <location>
        <begin position="42"/>
        <end position="47"/>
    </location>
</feature>
<dbReference type="EC" id="1.8.1.7"/>
<dbReference type="EMBL" id="U20229">
    <property type="protein sequence ID" value="AAA62137.1"/>
    <property type="molecule type" value="Genomic_DNA"/>
</dbReference>
<dbReference type="EMBL" id="L42023">
    <property type="protein sequence ID" value="AAC21833.1"/>
    <property type="molecule type" value="Genomic_DNA"/>
</dbReference>
<dbReference type="PIR" id="A64052">
    <property type="entry name" value="A64052"/>
</dbReference>
<dbReference type="RefSeq" id="NP_438331.1">
    <property type="nucleotide sequence ID" value="NC_000907.1"/>
</dbReference>
<dbReference type="SMR" id="P43783"/>
<dbReference type="STRING" id="71421.HI_0161"/>
<dbReference type="EnsemblBacteria" id="AAC21833">
    <property type="protein sequence ID" value="AAC21833"/>
    <property type="gene ID" value="HI_0161"/>
</dbReference>
<dbReference type="KEGG" id="hin:HI_0161"/>
<dbReference type="PATRIC" id="fig|71421.8.peg.167"/>
<dbReference type="eggNOG" id="COG1249">
    <property type="taxonomic scope" value="Bacteria"/>
</dbReference>
<dbReference type="HOGENOM" id="CLU_016755_2_2_6"/>
<dbReference type="OrthoDB" id="9800167at2"/>
<dbReference type="PhylomeDB" id="P43783"/>
<dbReference type="BioCyc" id="HINF71421:G1GJ1-173-MONOMER"/>
<dbReference type="Proteomes" id="UP000000579">
    <property type="component" value="Chromosome"/>
</dbReference>
<dbReference type="GO" id="GO:0005829">
    <property type="term" value="C:cytosol"/>
    <property type="evidence" value="ECO:0000318"/>
    <property type="project" value="GO_Central"/>
</dbReference>
<dbReference type="GO" id="GO:0050660">
    <property type="term" value="F:flavin adenine dinucleotide binding"/>
    <property type="evidence" value="ECO:0000318"/>
    <property type="project" value="GO_Central"/>
</dbReference>
<dbReference type="GO" id="GO:0004362">
    <property type="term" value="F:glutathione-disulfide reductase (NADPH) activity"/>
    <property type="evidence" value="ECO:0000318"/>
    <property type="project" value="GO_Central"/>
</dbReference>
<dbReference type="GO" id="GO:0050661">
    <property type="term" value="F:NADP binding"/>
    <property type="evidence" value="ECO:0007669"/>
    <property type="project" value="InterPro"/>
</dbReference>
<dbReference type="GO" id="GO:0045454">
    <property type="term" value="P:cell redox homeostasis"/>
    <property type="evidence" value="ECO:0000318"/>
    <property type="project" value="GO_Central"/>
</dbReference>
<dbReference type="GO" id="GO:0034599">
    <property type="term" value="P:cellular response to oxidative stress"/>
    <property type="evidence" value="ECO:0000318"/>
    <property type="project" value="GO_Central"/>
</dbReference>
<dbReference type="GO" id="GO:0006749">
    <property type="term" value="P:glutathione metabolic process"/>
    <property type="evidence" value="ECO:0000318"/>
    <property type="project" value="GO_Central"/>
</dbReference>
<dbReference type="FunFam" id="3.30.390.30:FF:000003">
    <property type="entry name" value="Glutathione reductase"/>
    <property type="match status" value="1"/>
</dbReference>
<dbReference type="FunFam" id="3.50.50.60:FF:000030">
    <property type="entry name" value="Glutathione reductase"/>
    <property type="match status" value="1"/>
</dbReference>
<dbReference type="Gene3D" id="3.30.390.30">
    <property type="match status" value="1"/>
</dbReference>
<dbReference type="Gene3D" id="3.50.50.60">
    <property type="entry name" value="FAD/NAD(P)-binding domain"/>
    <property type="match status" value="2"/>
</dbReference>
<dbReference type="InterPro" id="IPR036188">
    <property type="entry name" value="FAD/NAD-bd_sf"/>
</dbReference>
<dbReference type="InterPro" id="IPR023753">
    <property type="entry name" value="FAD/NAD-binding_dom"/>
</dbReference>
<dbReference type="InterPro" id="IPR016156">
    <property type="entry name" value="FAD/NAD-linked_Rdtase_dimer_sf"/>
</dbReference>
<dbReference type="InterPro" id="IPR006322">
    <property type="entry name" value="Glutathione_Rdtase_euk/bac"/>
</dbReference>
<dbReference type="InterPro" id="IPR046952">
    <property type="entry name" value="GSHR/TRXR-like"/>
</dbReference>
<dbReference type="InterPro" id="IPR001100">
    <property type="entry name" value="Pyr_nuc-diS_OxRdtase"/>
</dbReference>
<dbReference type="InterPro" id="IPR004099">
    <property type="entry name" value="Pyr_nucl-diS_OxRdtase_dimer"/>
</dbReference>
<dbReference type="InterPro" id="IPR012999">
    <property type="entry name" value="Pyr_OxRdtase_I_AS"/>
</dbReference>
<dbReference type="NCBIfam" id="TIGR01421">
    <property type="entry name" value="gluta_reduc_1"/>
    <property type="match status" value="1"/>
</dbReference>
<dbReference type="NCBIfam" id="NF004776">
    <property type="entry name" value="PRK06116.1"/>
    <property type="match status" value="1"/>
</dbReference>
<dbReference type="PANTHER" id="PTHR42737">
    <property type="entry name" value="GLUTATHIONE REDUCTASE"/>
    <property type="match status" value="1"/>
</dbReference>
<dbReference type="PANTHER" id="PTHR42737:SF2">
    <property type="entry name" value="GLUTATHIONE REDUCTASE"/>
    <property type="match status" value="1"/>
</dbReference>
<dbReference type="Pfam" id="PF07992">
    <property type="entry name" value="Pyr_redox_2"/>
    <property type="match status" value="1"/>
</dbReference>
<dbReference type="Pfam" id="PF02852">
    <property type="entry name" value="Pyr_redox_dim"/>
    <property type="match status" value="1"/>
</dbReference>
<dbReference type="PIRSF" id="PIRSF000350">
    <property type="entry name" value="Mercury_reductase_MerA"/>
    <property type="match status" value="1"/>
</dbReference>
<dbReference type="PRINTS" id="PR00368">
    <property type="entry name" value="FADPNR"/>
</dbReference>
<dbReference type="PRINTS" id="PR00411">
    <property type="entry name" value="PNDRDTASEI"/>
</dbReference>
<dbReference type="SUPFAM" id="SSF51905">
    <property type="entry name" value="FAD/NAD(P)-binding domain"/>
    <property type="match status" value="1"/>
</dbReference>
<dbReference type="SUPFAM" id="SSF55424">
    <property type="entry name" value="FAD/NAD-linked reductases, dimerisation (C-terminal) domain"/>
    <property type="match status" value="1"/>
</dbReference>
<dbReference type="PROSITE" id="PS00076">
    <property type="entry name" value="PYRIDINE_REDOX_1"/>
    <property type="match status" value="1"/>
</dbReference>
<protein>
    <recommendedName>
        <fullName>Glutathione reductase</fullName>
        <shortName>GR</shortName>
        <shortName>GRase</shortName>
        <ecNumber>1.8.1.7</ecNumber>
    </recommendedName>
</protein>
<sequence length="456" mass="49329">MTKHYDYIAIGGGSGGIASLNRAASYGKKCAIIEAKHLGGTCVNVGCVPKKVMFYGAHIAEAINNYAPDYGFDVEVKKFDFSKLIESRQAYISRIHTSYNNVLAKNNIDVINGFGKFVDAHTIEVTLADGTKEQVTADHILIATGGRPYRPNIKGQEYGIDSDGFFALTELPKRAAVIGAGYIAVELSGVLNSLGVETHLLVRRHAPMRNQDPLIVETLVEVLAQDGIQLHTNSTPSEIVKNADGSLTVRCDGQSDVTVDCVIWAAGRVPTTDKIGLENAGVETNEHGYVKVDKYQNTNVKGIYAVGDIIENGIELTPVAVAAGRRLSERLFNNKPTEYLDYSLVPTVVFSHPPIGTVGLTEPQAIEQYGAENVKVYKSSFTAMYTAVTQHRQPCKMKLVCVGKDEKVVGLHGIGFGVDEMIQGFAVAIKMGATKADFDNTVAIHPTGSEEFVTMR</sequence>
<evidence type="ECO:0000250" key="1">
    <source>
        <dbReference type="UniProtKB" id="P00390"/>
    </source>
</evidence>
<evidence type="ECO:0000250" key="2">
    <source>
        <dbReference type="UniProtKB" id="P06715"/>
    </source>
</evidence>
<evidence type="ECO:0000305" key="3"/>
<reference key="1">
    <citation type="submission" date="1995-01" db="EMBL/GenBank/DDBJ databases">
        <authorList>
            <person name="Barcak G.J."/>
            <person name="Heimer S.R."/>
        </authorList>
    </citation>
    <scope>NUCLEOTIDE SEQUENCE [GENOMIC DNA]</scope>
    <source>
        <strain>ATCC 51907 / DSM 11121 / KW20 / Rd</strain>
    </source>
</reference>
<reference key="2">
    <citation type="journal article" date="1995" name="Science">
        <title>Whole-genome random sequencing and assembly of Haemophilus influenzae Rd.</title>
        <authorList>
            <person name="Fleischmann R.D."/>
            <person name="Adams M.D."/>
            <person name="White O."/>
            <person name="Clayton R.A."/>
            <person name="Kirkness E.F."/>
            <person name="Kerlavage A.R."/>
            <person name="Bult C.J."/>
            <person name="Tomb J.-F."/>
            <person name="Dougherty B.A."/>
            <person name="Merrick J.M."/>
            <person name="McKenney K."/>
            <person name="Sutton G.G."/>
            <person name="FitzHugh W."/>
            <person name="Fields C.A."/>
            <person name="Gocayne J.D."/>
            <person name="Scott J.D."/>
            <person name="Shirley R."/>
            <person name="Liu L.-I."/>
            <person name="Glodek A."/>
            <person name="Kelley J.M."/>
            <person name="Weidman J.F."/>
            <person name="Phillips C.A."/>
            <person name="Spriggs T."/>
            <person name="Hedblom E."/>
            <person name="Cotton M.D."/>
            <person name="Utterback T.R."/>
            <person name="Hanna M.C."/>
            <person name="Nguyen D.T."/>
            <person name="Saudek D.M."/>
            <person name="Brandon R.C."/>
            <person name="Fine L.D."/>
            <person name="Fritchman J.L."/>
            <person name="Fuhrmann J.L."/>
            <person name="Geoghagen N.S.M."/>
            <person name="Gnehm C.L."/>
            <person name="McDonald L.A."/>
            <person name="Small K.V."/>
            <person name="Fraser C.M."/>
            <person name="Smith H.O."/>
            <person name="Venter J.C."/>
        </authorList>
    </citation>
    <scope>NUCLEOTIDE SEQUENCE [LARGE SCALE GENOMIC DNA]</scope>
    <source>
        <strain>ATCC 51907 / DSM 11121 / KW20 / Rd</strain>
    </source>
</reference>
<accession>P43783</accession>
<proteinExistence type="inferred from homology"/>